<proteinExistence type="evidence at protein level"/>
<protein>
    <recommendedName>
        <fullName evidence="2">Small ribosomal subunit protein eS1</fullName>
    </recommendedName>
    <alternativeName>
        <fullName evidence="7">40S ribosomal protein S3a</fullName>
    </alternativeName>
    <alternativeName>
        <fullName>Protein TU-11</fullName>
    </alternativeName>
</protein>
<feature type="chain" id="PRO_0000153525" description="Small ribosomal subunit protein eS1">
    <location>
        <begin position="1"/>
        <end position="264"/>
    </location>
</feature>
<feature type="region of interest" description="Disordered" evidence="3">
    <location>
        <begin position="233"/>
        <end position="264"/>
    </location>
</feature>
<feature type="compositionally biased region" description="Basic and acidic residues" evidence="3">
    <location>
        <begin position="242"/>
        <end position="255"/>
    </location>
</feature>
<feature type="modified residue" description="N6-acetyllysine; alternate" evidence="1">
    <location>
        <position position="34"/>
    </location>
</feature>
<feature type="modified residue" description="N6-acetyllysine" evidence="13">
    <location>
        <position position="56"/>
    </location>
</feature>
<feature type="modified residue" description="ADP-ribosyltyrosine" evidence="1">
    <location>
        <position position="155"/>
    </location>
</feature>
<feature type="modified residue" description="Phosphoserine" evidence="10 12">
    <location>
        <position position="237"/>
    </location>
</feature>
<feature type="modified residue" description="N6-acetyllysine; alternate" evidence="1">
    <location>
        <position position="249"/>
    </location>
</feature>
<feature type="modified residue" description="Phosphotyrosine" evidence="11">
    <location>
        <position position="256"/>
    </location>
</feature>
<feature type="modified residue" description="Phosphoserine" evidence="12">
    <location>
        <position position="263"/>
    </location>
</feature>
<feature type="cross-link" description="Glycyl lysine isopeptide (Lys-Gly) (interchain with G-Cter in SUMO2); alternate" evidence="1">
    <location>
        <position position="34"/>
    </location>
</feature>
<feature type="cross-link" description="Glycyl lysine isopeptide (Lys-Gly) (interchain with G-Cter in SUMO2); alternate" evidence="1">
    <location>
        <position position="249"/>
    </location>
</feature>
<gene>
    <name type="primary">Rps3a</name>
    <name type="synonym">Rps3a1</name>
</gene>
<comment type="function">
    <text evidence="1 2 4 6">Component of the small ribosomal subunit (PubMed:36517592). The ribosome is a large ribonucleoprotein complex responsible for the synthesis of proteins in the cell (PubMed:36517592). Part of the small subunit (SSU) processome, first precursor of the small eukaryotic ribosomal subunit. During the assembly of the SSU processome in the nucleolus, many ribosome biogenesis factors, an RNA chaperone and ribosomal proteins associate with the nascent pre-rRNA and work in concert to generate RNA folding, modifications, rearrangements and cleavage as well as targeted degradation of pre-ribosomal RNA by the RNA exosome (By similarity). May play a role during erythropoiesis through regulation of transcription factor DDIT3 (PubMed:10713066).</text>
</comment>
<comment type="subunit">
    <text evidence="1 2 4 5 6">Component of the small ribosomal subunit (PubMed:36517592). Mature ribosomes consist of a small (40S) and a large (60S) subunit (PubMed:36517592). The 40S subunit contains about 33 different proteins and 1 molecule of RNA (18S) (PubMed:36517592). The 60S subunit contains about 49 different proteins and 3 molecules of RNA (28S, 5.8S and 5S) (PubMed:36517592). Identified in a IGF2BP1-dependent mRNP granule complex containing untranslated mRNAs. Binds with high affinity to IPO4. Interacts with DDIT3. Part of the small subunit (SSU) processome, composed of more than 70 proteins and the RNA chaperone small nucleolar RNA (snoRNA) U3 (By similarity).</text>
</comment>
<comment type="subcellular location">
    <subcellularLocation>
        <location evidence="2 4 6">Cytoplasm</location>
    </subcellularLocation>
    <subcellularLocation>
        <location evidence="2 4">Nucleus</location>
    </subcellularLocation>
    <subcellularLocation>
        <location evidence="1">Nucleus</location>
        <location evidence="1">Nucleolus</location>
    </subcellularLocation>
    <text evidence="2">Localized in cytoplasmic mRNP granules containing untranslated mRNAs.</text>
</comment>
<comment type="PTM">
    <text evidence="1">ADP-ribosylated at Tyr-155 by PARP1 in presence of HPF1.</text>
</comment>
<comment type="similarity">
    <text evidence="2">Belongs to the eukaryotic ribosomal protein eS1 family.</text>
</comment>
<organism>
    <name type="scientific">Mus musculus</name>
    <name type="common">Mouse</name>
    <dbReference type="NCBI Taxonomy" id="10090"/>
    <lineage>
        <taxon>Eukaryota</taxon>
        <taxon>Metazoa</taxon>
        <taxon>Chordata</taxon>
        <taxon>Craniata</taxon>
        <taxon>Vertebrata</taxon>
        <taxon>Euteleostomi</taxon>
        <taxon>Mammalia</taxon>
        <taxon>Eutheria</taxon>
        <taxon>Euarchontoglires</taxon>
        <taxon>Glires</taxon>
        <taxon>Rodentia</taxon>
        <taxon>Myomorpha</taxon>
        <taxon>Muroidea</taxon>
        <taxon>Muridae</taxon>
        <taxon>Murinae</taxon>
        <taxon>Mus</taxon>
        <taxon>Mus</taxon>
    </lineage>
</organism>
<reference key="1">
    <citation type="journal article" date="1998" name="Gene">
        <title>A novel snoRNA (U73) is encoded within the introns of the human and mouse ribosomal protein S3a genes.</title>
        <authorList>
            <person name="Rebane A."/>
            <person name="Tamme R."/>
            <person name="Laan M."/>
            <person name="Pata I."/>
            <person name="Metspalu A."/>
        </authorList>
    </citation>
    <scope>NUCLEOTIDE SEQUENCE [GENOMIC DNA]</scope>
    <source>
        <strain>129/Sv</strain>
        <tissue>Liver</tissue>
    </source>
</reference>
<reference key="2">
    <citation type="journal article" date="2005" name="Science">
        <title>The transcriptional landscape of the mammalian genome.</title>
        <authorList>
            <person name="Carninci P."/>
            <person name="Kasukawa T."/>
            <person name="Katayama S."/>
            <person name="Gough J."/>
            <person name="Frith M.C."/>
            <person name="Maeda N."/>
            <person name="Oyama R."/>
            <person name="Ravasi T."/>
            <person name="Lenhard B."/>
            <person name="Wells C."/>
            <person name="Kodzius R."/>
            <person name="Shimokawa K."/>
            <person name="Bajic V.B."/>
            <person name="Brenner S.E."/>
            <person name="Batalov S."/>
            <person name="Forrest A.R."/>
            <person name="Zavolan M."/>
            <person name="Davis M.J."/>
            <person name="Wilming L.G."/>
            <person name="Aidinis V."/>
            <person name="Allen J.E."/>
            <person name="Ambesi-Impiombato A."/>
            <person name="Apweiler R."/>
            <person name="Aturaliya R.N."/>
            <person name="Bailey T.L."/>
            <person name="Bansal M."/>
            <person name="Baxter L."/>
            <person name="Beisel K.W."/>
            <person name="Bersano T."/>
            <person name="Bono H."/>
            <person name="Chalk A.M."/>
            <person name="Chiu K.P."/>
            <person name="Choudhary V."/>
            <person name="Christoffels A."/>
            <person name="Clutterbuck D.R."/>
            <person name="Crowe M.L."/>
            <person name="Dalla E."/>
            <person name="Dalrymple B.P."/>
            <person name="de Bono B."/>
            <person name="Della Gatta G."/>
            <person name="di Bernardo D."/>
            <person name="Down T."/>
            <person name="Engstrom P."/>
            <person name="Fagiolini M."/>
            <person name="Faulkner G."/>
            <person name="Fletcher C.F."/>
            <person name="Fukushima T."/>
            <person name="Furuno M."/>
            <person name="Futaki S."/>
            <person name="Gariboldi M."/>
            <person name="Georgii-Hemming P."/>
            <person name="Gingeras T.R."/>
            <person name="Gojobori T."/>
            <person name="Green R.E."/>
            <person name="Gustincich S."/>
            <person name="Harbers M."/>
            <person name="Hayashi Y."/>
            <person name="Hensch T.K."/>
            <person name="Hirokawa N."/>
            <person name="Hill D."/>
            <person name="Huminiecki L."/>
            <person name="Iacono M."/>
            <person name="Ikeo K."/>
            <person name="Iwama A."/>
            <person name="Ishikawa T."/>
            <person name="Jakt M."/>
            <person name="Kanapin A."/>
            <person name="Katoh M."/>
            <person name="Kawasawa Y."/>
            <person name="Kelso J."/>
            <person name="Kitamura H."/>
            <person name="Kitano H."/>
            <person name="Kollias G."/>
            <person name="Krishnan S.P."/>
            <person name="Kruger A."/>
            <person name="Kummerfeld S.K."/>
            <person name="Kurochkin I.V."/>
            <person name="Lareau L.F."/>
            <person name="Lazarevic D."/>
            <person name="Lipovich L."/>
            <person name="Liu J."/>
            <person name="Liuni S."/>
            <person name="McWilliam S."/>
            <person name="Madan Babu M."/>
            <person name="Madera M."/>
            <person name="Marchionni L."/>
            <person name="Matsuda H."/>
            <person name="Matsuzawa S."/>
            <person name="Miki H."/>
            <person name="Mignone F."/>
            <person name="Miyake S."/>
            <person name="Morris K."/>
            <person name="Mottagui-Tabar S."/>
            <person name="Mulder N."/>
            <person name="Nakano N."/>
            <person name="Nakauchi H."/>
            <person name="Ng P."/>
            <person name="Nilsson R."/>
            <person name="Nishiguchi S."/>
            <person name="Nishikawa S."/>
            <person name="Nori F."/>
            <person name="Ohara O."/>
            <person name="Okazaki Y."/>
            <person name="Orlando V."/>
            <person name="Pang K.C."/>
            <person name="Pavan W.J."/>
            <person name="Pavesi G."/>
            <person name="Pesole G."/>
            <person name="Petrovsky N."/>
            <person name="Piazza S."/>
            <person name="Reed J."/>
            <person name="Reid J.F."/>
            <person name="Ring B.Z."/>
            <person name="Ringwald M."/>
            <person name="Rost B."/>
            <person name="Ruan Y."/>
            <person name="Salzberg S.L."/>
            <person name="Sandelin A."/>
            <person name="Schneider C."/>
            <person name="Schoenbach C."/>
            <person name="Sekiguchi K."/>
            <person name="Semple C.A."/>
            <person name="Seno S."/>
            <person name="Sessa L."/>
            <person name="Sheng Y."/>
            <person name="Shibata Y."/>
            <person name="Shimada H."/>
            <person name="Shimada K."/>
            <person name="Silva D."/>
            <person name="Sinclair B."/>
            <person name="Sperling S."/>
            <person name="Stupka E."/>
            <person name="Sugiura K."/>
            <person name="Sultana R."/>
            <person name="Takenaka Y."/>
            <person name="Taki K."/>
            <person name="Tammoja K."/>
            <person name="Tan S.L."/>
            <person name="Tang S."/>
            <person name="Taylor M.S."/>
            <person name="Tegner J."/>
            <person name="Teichmann S.A."/>
            <person name="Ueda H.R."/>
            <person name="van Nimwegen E."/>
            <person name="Verardo R."/>
            <person name="Wei C.L."/>
            <person name="Yagi K."/>
            <person name="Yamanishi H."/>
            <person name="Zabarovsky E."/>
            <person name="Zhu S."/>
            <person name="Zimmer A."/>
            <person name="Hide W."/>
            <person name="Bult C."/>
            <person name="Grimmond S.M."/>
            <person name="Teasdale R.D."/>
            <person name="Liu E.T."/>
            <person name="Brusic V."/>
            <person name="Quackenbush J."/>
            <person name="Wahlestedt C."/>
            <person name="Mattick J.S."/>
            <person name="Hume D.A."/>
            <person name="Kai C."/>
            <person name="Sasaki D."/>
            <person name="Tomaru Y."/>
            <person name="Fukuda S."/>
            <person name="Kanamori-Katayama M."/>
            <person name="Suzuki M."/>
            <person name="Aoki J."/>
            <person name="Arakawa T."/>
            <person name="Iida J."/>
            <person name="Imamura K."/>
            <person name="Itoh M."/>
            <person name="Kato T."/>
            <person name="Kawaji H."/>
            <person name="Kawagashira N."/>
            <person name="Kawashima T."/>
            <person name="Kojima M."/>
            <person name="Kondo S."/>
            <person name="Konno H."/>
            <person name="Nakano K."/>
            <person name="Ninomiya N."/>
            <person name="Nishio T."/>
            <person name="Okada M."/>
            <person name="Plessy C."/>
            <person name="Shibata K."/>
            <person name="Shiraki T."/>
            <person name="Suzuki S."/>
            <person name="Tagami M."/>
            <person name="Waki K."/>
            <person name="Watahiki A."/>
            <person name="Okamura-Oho Y."/>
            <person name="Suzuki H."/>
            <person name="Kawai J."/>
            <person name="Hayashizaki Y."/>
        </authorList>
    </citation>
    <scope>NUCLEOTIDE SEQUENCE [LARGE SCALE MRNA]</scope>
    <source>
        <strain>NOD</strain>
        <tissue>Thymus</tissue>
    </source>
</reference>
<reference key="3">
    <citation type="journal article" date="2004" name="Genome Res.">
        <title>The status, quality, and expansion of the NIH full-length cDNA project: the Mammalian Gene Collection (MGC).</title>
        <authorList>
            <consortium name="The MGC Project Team"/>
        </authorList>
    </citation>
    <scope>NUCLEOTIDE SEQUENCE [LARGE SCALE MRNA]</scope>
    <source>
        <strain>C57BL/6J</strain>
        <tissue>Brain</tissue>
        <tissue>Mammary gland</tissue>
    </source>
</reference>
<reference key="4">
    <citation type="journal article" date="1997" name="Gene">
        <title>The S3a ribosomal protein gene is identical to the Fte-1 (v-fos transformation effector) gene and the TNF-alpha-induced TU-11 gene, and its transcript level is altered in transformed and tumor cells.</title>
        <authorList>
            <person name="Lecomte F."/>
            <person name="Szpirer J."/>
            <person name="Szpirer C."/>
        </authorList>
    </citation>
    <scope>GENE NAME</scope>
</reference>
<reference key="5">
    <citation type="journal article" date="2000" name="J. Biol. Chem.">
        <title>Novel interaction between the transcription factor CHOP (GADD153) and the ribosomal protein FTE/S3a modulates erythropoiesis.</title>
        <authorList>
            <person name="Cui K."/>
            <person name="Coutts M."/>
            <person name="Stahl J."/>
            <person name="Sytkowski A.J."/>
        </authorList>
    </citation>
    <scope>FUNCTION</scope>
    <scope>INTERACTION WITH DDIT3</scope>
    <scope>SUBCELLULAR LOCATION</scope>
</reference>
<reference key="6">
    <citation type="journal article" date="2002" name="EMBO J.">
        <title>Importins fulfill a dual function as nuclear import receptors and cytoplasmic chaperones for exposed basic domains.</title>
        <authorList>
            <person name="Jaekel S."/>
            <person name="Mingot J.-M."/>
            <person name="Schwarzmaier P."/>
            <person name="Hartmann E."/>
            <person name="Goerlich D."/>
        </authorList>
    </citation>
    <scope>INTERACTION WITH IPO4</scope>
</reference>
<reference key="7">
    <citation type="journal article" date="2007" name="J. Immunol.">
        <title>Quantitative time-resolved phosphoproteomic analysis of mast cell signaling.</title>
        <authorList>
            <person name="Cao L."/>
            <person name="Yu K."/>
            <person name="Banh C."/>
            <person name="Nguyen V."/>
            <person name="Ritz A."/>
            <person name="Raphael B.J."/>
            <person name="Kawakami Y."/>
            <person name="Kawakami T."/>
            <person name="Salomon A.R."/>
        </authorList>
    </citation>
    <scope>PHOSPHORYLATION [LARGE SCALE ANALYSIS] AT TYR-256</scope>
    <scope>IDENTIFICATION BY MASS SPECTROMETRY [LARGE SCALE ANALYSIS]</scope>
    <source>
        <tissue>Mast cell</tissue>
    </source>
</reference>
<reference key="8">
    <citation type="journal article" date="2007" name="Proc. Natl. Acad. Sci. U.S.A.">
        <title>Large-scale phosphorylation analysis of mouse liver.</title>
        <authorList>
            <person name="Villen J."/>
            <person name="Beausoleil S.A."/>
            <person name="Gerber S.A."/>
            <person name="Gygi S.P."/>
        </authorList>
    </citation>
    <scope>PHOSPHORYLATION [LARGE SCALE ANALYSIS] AT SER-237</scope>
    <scope>IDENTIFICATION BY MASS SPECTROMETRY [LARGE SCALE ANALYSIS]</scope>
    <source>
        <tissue>Liver</tissue>
    </source>
</reference>
<reference key="9">
    <citation type="journal article" date="2010" name="Cell">
        <title>A tissue-specific atlas of mouse protein phosphorylation and expression.</title>
        <authorList>
            <person name="Huttlin E.L."/>
            <person name="Jedrychowski M.P."/>
            <person name="Elias J.E."/>
            <person name="Goswami T."/>
            <person name="Rad R."/>
            <person name="Beausoleil S.A."/>
            <person name="Villen J."/>
            <person name="Haas W."/>
            <person name="Sowa M.E."/>
            <person name="Gygi S.P."/>
        </authorList>
    </citation>
    <scope>PHOSPHORYLATION [LARGE SCALE ANALYSIS] AT SER-237 AND SER-263</scope>
    <scope>IDENTIFICATION BY MASS SPECTROMETRY [LARGE SCALE ANALYSIS]</scope>
    <source>
        <tissue>Brain</tissue>
        <tissue>Brown adipose tissue</tissue>
        <tissue>Heart</tissue>
        <tissue>Kidney</tissue>
        <tissue>Liver</tissue>
        <tissue>Lung</tissue>
        <tissue>Pancreas</tissue>
        <tissue>Spleen</tissue>
        <tissue>Testis</tissue>
    </source>
</reference>
<reference key="10">
    <citation type="journal article" date="2013" name="Mol. Cell">
        <title>SIRT5-mediated lysine desuccinylation impacts diverse metabolic pathways.</title>
        <authorList>
            <person name="Park J."/>
            <person name="Chen Y."/>
            <person name="Tishkoff D.X."/>
            <person name="Peng C."/>
            <person name="Tan M."/>
            <person name="Dai L."/>
            <person name="Xie Z."/>
            <person name="Zhang Y."/>
            <person name="Zwaans B.M."/>
            <person name="Skinner M.E."/>
            <person name="Lombard D.B."/>
            <person name="Zhao Y."/>
        </authorList>
    </citation>
    <scope>ACETYLATION [LARGE SCALE ANALYSIS] AT LYS-56</scope>
    <scope>IDENTIFICATION BY MASS SPECTROMETRY [LARGE SCALE ANALYSIS]</scope>
    <source>
        <tissue>Embryonic fibroblast</tissue>
    </source>
</reference>
<reference evidence="8 9" key="11">
    <citation type="journal article" date="2022" name="Nature">
        <title>A male germ-cell-specific ribosome controls male fertility.</title>
        <authorList>
            <person name="Li H."/>
            <person name="Huo Y."/>
            <person name="He X."/>
            <person name="Yao L."/>
            <person name="Zhang H."/>
            <person name="Cui Y."/>
            <person name="Xiao H."/>
            <person name="Xie W."/>
            <person name="Zhang D."/>
            <person name="Wang Y."/>
            <person name="Zhang S."/>
            <person name="Tu H."/>
            <person name="Cheng Y."/>
            <person name="Guo Y."/>
            <person name="Cao X."/>
            <person name="Zhu Y."/>
            <person name="Jiang T."/>
            <person name="Guo X."/>
            <person name="Qin Y."/>
            <person name="Sha J."/>
        </authorList>
    </citation>
    <scope>STRUCTURE BY ELECTRON MICROSCOPY (3.03 ANGSTROMS) OF RIBOSOME</scope>
    <scope>FUNCTION</scope>
    <scope>SUBUNIT</scope>
    <scope>SUBCELLULAR LOCATION</scope>
</reference>
<name>RS3A_MOUSE</name>
<keyword id="KW-0002">3D-structure</keyword>
<keyword id="KW-0007">Acetylation</keyword>
<keyword id="KW-0013">ADP-ribosylation</keyword>
<keyword id="KW-0963">Cytoplasm</keyword>
<keyword id="KW-0221">Differentiation</keyword>
<keyword id="KW-1017">Isopeptide bond</keyword>
<keyword id="KW-0539">Nucleus</keyword>
<keyword id="KW-0597">Phosphoprotein</keyword>
<keyword id="KW-1185">Reference proteome</keyword>
<keyword id="KW-0687">Ribonucleoprotein</keyword>
<keyword id="KW-0689">Ribosomal protein</keyword>
<keyword id="KW-0832">Ubl conjugation</keyword>
<evidence type="ECO:0000250" key="1">
    <source>
        <dbReference type="UniProtKB" id="P61247"/>
    </source>
</evidence>
<evidence type="ECO:0000255" key="2">
    <source>
        <dbReference type="HAMAP-Rule" id="MF_03122"/>
    </source>
</evidence>
<evidence type="ECO:0000256" key="3">
    <source>
        <dbReference type="SAM" id="MobiDB-lite"/>
    </source>
</evidence>
<evidence type="ECO:0000269" key="4">
    <source>
    </source>
</evidence>
<evidence type="ECO:0000269" key="5">
    <source>
    </source>
</evidence>
<evidence type="ECO:0000269" key="6">
    <source>
    </source>
</evidence>
<evidence type="ECO:0000305" key="7"/>
<evidence type="ECO:0007744" key="8">
    <source>
        <dbReference type="PDB" id="7CPU"/>
    </source>
</evidence>
<evidence type="ECO:0007744" key="9">
    <source>
        <dbReference type="PDB" id="7CPV"/>
    </source>
</evidence>
<evidence type="ECO:0007744" key="10">
    <source>
    </source>
</evidence>
<evidence type="ECO:0007744" key="11">
    <source>
    </source>
</evidence>
<evidence type="ECO:0007744" key="12">
    <source>
    </source>
</evidence>
<evidence type="ECO:0007744" key="13">
    <source>
    </source>
</evidence>
<sequence length="264" mass="29885">MAVGKNKRLTKGGKKGAKKKVVDPFSKKDWYDVKAPAMFNIRNIGKTLVTRTQGTKIASDGLKGRVFEVSLADLQNDEVAFRKFKLITEDVQGKNCLTNFHGMDLTRDKMCSMVKKWQTMIEAHVDVKTTDGYLLRLFCVGFTKKRNNQIRKTSYAQHQQVRQIRKKMMEIMTREVQTNDLKEVVNKLIPDSIGKDIEKACQSIYPLHDVFVRKVKMLKKPKFELGKLMELHGEGGSSGKAAGDETGAKVERADGYEPPVQESV</sequence>
<accession>P97351</accession>
<dbReference type="EMBL" id="Z83368">
    <property type="protein sequence ID" value="CAB05955.1"/>
    <property type="molecule type" value="Genomic_DNA"/>
</dbReference>
<dbReference type="EMBL" id="AK088113">
    <property type="protein sequence ID" value="BAC40152.1"/>
    <property type="molecule type" value="mRNA"/>
</dbReference>
<dbReference type="EMBL" id="BC039659">
    <property type="protein sequence ID" value="AAH39659.1"/>
    <property type="molecule type" value="mRNA"/>
</dbReference>
<dbReference type="EMBL" id="BC081451">
    <property type="protein sequence ID" value="AAH81451.1"/>
    <property type="molecule type" value="mRNA"/>
</dbReference>
<dbReference type="EMBL" id="BC083338">
    <property type="protein sequence ID" value="AAH83338.1"/>
    <property type="molecule type" value="mRNA"/>
</dbReference>
<dbReference type="EMBL" id="BC084675">
    <property type="protein sequence ID" value="AAH84675.1"/>
    <property type="molecule type" value="mRNA"/>
</dbReference>
<dbReference type="CCDS" id="CCDS17446.1"/>
<dbReference type="RefSeq" id="NP_058655.3">
    <property type="nucleotide sequence ID" value="NM_016959.4"/>
</dbReference>
<dbReference type="PDB" id="7CPU">
    <property type="method" value="EM"/>
    <property type="resolution" value="2.82 A"/>
    <property type="chains" value="SB=1-264"/>
</dbReference>
<dbReference type="PDB" id="7CPV">
    <property type="method" value="EM"/>
    <property type="resolution" value="3.03 A"/>
    <property type="chains" value="SB=1-264"/>
</dbReference>
<dbReference type="PDB" id="7LS1">
    <property type="method" value="EM"/>
    <property type="resolution" value="3.30 A"/>
    <property type="chains" value="p2=1-264"/>
</dbReference>
<dbReference type="PDB" id="7LS2">
    <property type="method" value="EM"/>
    <property type="resolution" value="3.10 A"/>
    <property type="chains" value="p2=1-264"/>
</dbReference>
<dbReference type="PDB" id="7NWI">
    <property type="method" value="EM"/>
    <property type="resolution" value="3.13 A"/>
    <property type="chains" value="BB=1-264"/>
</dbReference>
<dbReference type="PDBsum" id="7CPU"/>
<dbReference type="PDBsum" id="7CPV"/>
<dbReference type="PDBsum" id="7LS1"/>
<dbReference type="PDBsum" id="7LS2"/>
<dbReference type="PDBsum" id="7NWI"/>
<dbReference type="EMDB" id="EMD-12633"/>
<dbReference type="EMDB" id="EMD-23500"/>
<dbReference type="EMDB" id="EMD-23501"/>
<dbReference type="EMDB" id="EMD-30432"/>
<dbReference type="EMDB" id="EMD-30433"/>
<dbReference type="SMR" id="P97351"/>
<dbReference type="BioGRID" id="203010">
    <property type="interactions" value="137"/>
</dbReference>
<dbReference type="ComplexPortal" id="CPX-5261">
    <property type="entry name" value="40S cytosolic small ribosomal subunit"/>
</dbReference>
<dbReference type="CORUM" id="P97351"/>
<dbReference type="FunCoup" id="P97351">
    <property type="interactions" value="2156"/>
</dbReference>
<dbReference type="IntAct" id="P97351">
    <property type="interactions" value="6"/>
</dbReference>
<dbReference type="STRING" id="10090.ENSMUSP00000029722"/>
<dbReference type="GlyGen" id="P97351">
    <property type="glycosylation" value="1 site, 1 O-linked glycan (1 site)"/>
</dbReference>
<dbReference type="iPTMnet" id="P97351"/>
<dbReference type="PhosphoSitePlus" id="P97351"/>
<dbReference type="SwissPalm" id="P97351"/>
<dbReference type="jPOST" id="P97351"/>
<dbReference type="PaxDb" id="10090-ENSMUSP00000029722"/>
<dbReference type="PeptideAtlas" id="P97351"/>
<dbReference type="ProteomicsDB" id="260853"/>
<dbReference type="Pumba" id="P97351"/>
<dbReference type="TopDownProteomics" id="P97351"/>
<dbReference type="Antibodypedia" id="27718">
    <property type="antibodies" value="196 antibodies from 30 providers"/>
</dbReference>
<dbReference type="DNASU" id="20091"/>
<dbReference type="Ensembl" id="ENSMUST00000029722.7">
    <property type="protein sequence ID" value="ENSMUSP00000029722.7"/>
    <property type="gene ID" value="ENSMUSG00000028081.7"/>
</dbReference>
<dbReference type="GeneID" id="20091"/>
<dbReference type="KEGG" id="mmu:20091"/>
<dbReference type="UCSC" id="uc008prc.2">
    <property type="organism name" value="mouse"/>
</dbReference>
<dbReference type="AGR" id="MGI:1202063"/>
<dbReference type="CTD" id="20091"/>
<dbReference type="MGI" id="MGI:1202063">
    <property type="gene designation" value="Rps3a1"/>
</dbReference>
<dbReference type="VEuPathDB" id="HostDB:ENSMUSG00000028081"/>
<dbReference type="eggNOG" id="KOG1628">
    <property type="taxonomic scope" value="Eukaryota"/>
</dbReference>
<dbReference type="GeneTree" id="ENSGT00390000018433"/>
<dbReference type="HOGENOM" id="CLU_062507_0_1_1"/>
<dbReference type="InParanoid" id="P97351"/>
<dbReference type="OMA" id="TRFKGHE"/>
<dbReference type="OrthoDB" id="9834376at2759"/>
<dbReference type="PhylomeDB" id="P97351"/>
<dbReference type="TreeFam" id="TF300037"/>
<dbReference type="Reactome" id="R-MMU-156827">
    <property type="pathway name" value="L13a-mediated translational silencing of Ceruloplasmin expression"/>
</dbReference>
<dbReference type="Reactome" id="R-MMU-1799339">
    <property type="pathway name" value="SRP-dependent cotranslational protein targeting to membrane"/>
</dbReference>
<dbReference type="Reactome" id="R-MMU-6791226">
    <property type="pathway name" value="Major pathway of rRNA processing in the nucleolus and cytosol"/>
</dbReference>
<dbReference type="Reactome" id="R-MMU-72649">
    <property type="pathway name" value="Translation initiation complex formation"/>
</dbReference>
<dbReference type="Reactome" id="R-MMU-72689">
    <property type="pathway name" value="Formation of a pool of free 40S subunits"/>
</dbReference>
<dbReference type="Reactome" id="R-MMU-72695">
    <property type="pathway name" value="Formation of the ternary complex, and subsequently, the 43S complex"/>
</dbReference>
<dbReference type="Reactome" id="R-MMU-72702">
    <property type="pathway name" value="Ribosomal scanning and start codon recognition"/>
</dbReference>
<dbReference type="Reactome" id="R-MMU-72706">
    <property type="pathway name" value="GTP hydrolysis and joining of the 60S ribosomal subunit"/>
</dbReference>
<dbReference type="Reactome" id="R-MMU-975956">
    <property type="pathway name" value="Nonsense Mediated Decay (NMD) independent of the Exon Junction Complex (EJC)"/>
</dbReference>
<dbReference type="Reactome" id="R-MMU-975957">
    <property type="pathway name" value="Nonsense Mediated Decay (NMD) enhanced by the Exon Junction Complex (EJC)"/>
</dbReference>
<dbReference type="BioGRID-ORCS" id="20091">
    <property type="hits" value="19 hits in 54 CRISPR screens"/>
</dbReference>
<dbReference type="CD-CODE" id="CE726F99">
    <property type="entry name" value="Postsynaptic density"/>
</dbReference>
<dbReference type="ChiTaRS" id="Rps3a1">
    <property type="organism name" value="mouse"/>
</dbReference>
<dbReference type="PRO" id="PR:P97351"/>
<dbReference type="Proteomes" id="UP000000589">
    <property type="component" value="Chromosome 3"/>
</dbReference>
<dbReference type="RNAct" id="P97351">
    <property type="molecule type" value="protein"/>
</dbReference>
<dbReference type="Bgee" id="ENSMUSG00000028081">
    <property type="expression patterns" value="Expressed in ovary and 66 other cell types or tissues"/>
</dbReference>
<dbReference type="ExpressionAtlas" id="P97351">
    <property type="expression patterns" value="baseline and differential"/>
</dbReference>
<dbReference type="GO" id="GO:0005737">
    <property type="term" value="C:cytoplasm"/>
    <property type="evidence" value="ECO:0000303"/>
    <property type="project" value="ComplexPortal"/>
</dbReference>
<dbReference type="GO" id="GO:0005829">
    <property type="term" value="C:cytosol"/>
    <property type="evidence" value="ECO:0000314"/>
    <property type="project" value="UniProtKB"/>
</dbReference>
<dbReference type="GO" id="GO:0022627">
    <property type="term" value="C:cytosolic small ribosomal subunit"/>
    <property type="evidence" value="ECO:0000314"/>
    <property type="project" value="UniProtKB"/>
</dbReference>
<dbReference type="GO" id="GO:0005783">
    <property type="term" value="C:endoplasmic reticulum"/>
    <property type="evidence" value="ECO:0007669"/>
    <property type="project" value="Ensembl"/>
</dbReference>
<dbReference type="GO" id="GO:0005730">
    <property type="term" value="C:nucleolus"/>
    <property type="evidence" value="ECO:0007669"/>
    <property type="project" value="UniProtKB-SubCell"/>
</dbReference>
<dbReference type="GO" id="GO:0005634">
    <property type="term" value="C:nucleus"/>
    <property type="evidence" value="ECO:0000314"/>
    <property type="project" value="UniProtKB"/>
</dbReference>
<dbReference type="GO" id="GO:0098794">
    <property type="term" value="C:postsynapse"/>
    <property type="evidence" value="ECO:0000303"/>
    <property type="project" value="SynGO"/>
</dbReference>
<dbReference type="GO" id="GO:1990904">
    <property type="term" value="C:ribonucleoprotein complex"/>
    <property type="evidence" value="ECO:0000250"/>
    <property type="project" value="UniProtKB"/>
</dbReference>
<dbReference type="GO" id="GO:0005840">
    <property type="term" value="C:ribosome"/>
    <property type="evidence" value="ECO:0000303"/>
    <property type="project" value="SynGO"/>
</dbReference>
<dbReference type="GO" id="GO:0032040">
    <property type="term" value="C:small-subunit processome"/>
    <property type="evidence" value="ECO:0000250"/>
    <property type="project" value="UniProtKB"/>
</dbReference>
<dbReference type="GO" id="GO:0045202">
    <property type="term" value="C:synapse"/>
    <property type="evidence" value="ECO:0000314"/>
    <property type="project" value="SynGO"/>
</dbReference>
<dbReference type="GO" id="GO:0048027">
    <property type="term" value="F:mRNA 5'-UTR binding"/>
    <property type="evidence" value="ECO:0007669"/>
    <property type="project" value="Ensembl"/>
</dbReference>
<dbReference type="GO" id="GO:0003735">
    <property type="term" value="F:structural constituent of ribosome"/>
    <property type="evidence" value="ECO:0000314"/>
    <property type="project" value="UniProtKB"/>
</dbReference>
<dbReference type="GO" id="GO:0030154">
    <property type="term" value="P:cell differentiation"/>
    <property type="evidence" value="ECO:0007669"/>
    <property type="project" value="UniProtKB-KW"/>
</dbReference>
<dbReference type="GO" id="GO:0002181">
    <property type="term" value="P:cytoplasmic translation"/>
    <property type="evidence" value="ECO:0000303"/>
    <property type="project" value="ComplexPortal"/>
</dbReference>
<dbReference type="GO" id="GO:0043066">
    <property type="term" value="P:negative regulation of apoptotic process"/>
    <property type="evidence" value="ECO:0000250"/>
    <property type="project" value="UniProtKB"/>
</dbReference>
<dbReference type="GO" id="GO:0042274">
    <property type="term" value="P:ribosomal small subunit biogenesis"/>
    <property type="evidence" value="ECO:0000250"/>
    <property type="project" value="UniProtKB"/>
</dbReference>
<dbReference type="GO" id="GO:0006412">
    <property type="term" value="P:translation"/>
    <property type="evidence" value="ECO:0000250"/>
    <property type="project" value="UniProtKB"/>
</dbReference>
<dbReference type="HAMAP" id="MF_03122">
    <property type="entry name" value="Ribosomal_eS1_euk"/>
    <property type="match status" value="1"/>
</dbReference>
<dbReference type="InterPro" id="IPR001593">
    <property type="entry name" value="Ribosomal_eS1"/>
</dbReference>
<dbReference type="InterPro" id="IPR018281">
    <property type="entry name" value="Ribosomal_eS1_CS"/>
</dbReference>
<dbReference type="InterPro" id="IPR027500">
    <property type="entry name" value="Ribosomal_eS1_euk"/>
</dbReference>
<dbReference type="PANTHER" id="PTHR11830">
    <property type="entry name" value="40S RIBOSOMAL PROTEIN S3A"/>
    <property type="match status" value="1"/>
</dbReference>
<dbReference type="Pfam" id="PF01015">
    <property type="entry name" value="Ribosomal_S3Ae"/>
    <property type="match status" value="1"/>
</dbReference>
<dbReference type="SMART" id="SM01397">
    <property type="entry name" value="Ribosomal_S3Ae"/>
    <property type="match status" value="1"/>
</dbReference>
<dbReference type="PROSITE" id="PS01191">
    <property type="entry name" value="RIBOSOMAL_S3AE"/>
    <property type="match status" value="1"/>
</dbReference>